<evidence type="ECO:0000250" key="1"/>
<evidence type="ECO:0000305" key="2"/>
<name>U83A1_ARATH</name>
<organism>
    <name type="scientific">Arabidopsis thaliana</name>
    <name type="common">Mouse-ear cress</name>
    <dbReference type="NCBI Taxonomy" id="3702"/>
    <lineage>
        <taxon>Eukaryota</taxon>
        <taxon>Viridiplantae</taxon>
        <taxon>Streptophyta</taxon>
        <taxon>Embryophyta</taxon>
        <taxon>Tracheophyta</taxon>
        <taxon>Spermatophyta</taxon>
        <taxon>Magnoliopsida</taxon>
        <taxon>eudicotyledons</taxon>
        <taxon>Gunneridae</taxon>
        <taxon>Pentapetalae</taxon>
        <taxon>rosids</taxon>
        <taxon>malvids</taxon>
        <taxon>Brassicales</taxon>
        <taxon>Brassicaceae</taxon>
        <taxon>Camelineae</taxon>
        <taxon>Arabidopsis</taxon>
    </lineage>
</organism>
<accession>Q9SGA8</accession>
<feature type="chain" id="PRO_0000409119" description="UDP-glycosyltransferase 83A1">
    <location>
        <begin position="1"/>
        <end position="464"/>
    </location>
</feature>
<feature type="binding site" evidence="1">
    <location>
        <position position="295"/>
    </location>
    <ligand>
        <name>UDP-alpha-D-glucose</name>
        <dbReference type="ChEBI" id="CHEBI:58885"/>
    </ligand>
</feature>
<feature type="binding site" evidence="1">
    <location>
        <begin position="341"/>
        <end position="343"/>
    </location>
    <ligand>
        <name>UDP-alpha-D-glucose</name>
        <dbReference type="ChEBI" id="CHEBI:58885"/>
    </ligand>
</feature>
<feature type="binding site" evidence="1">
    <location>
        <begin position="358"/>
        <end position="366"/>
    </location>
    <ligand>
        <name>UDP-alpha-D-glucose</name>
        <dbReference type="ChEBI" id="CHEBI:58885"/>
    </ligand>
</feature>
<feature type="binding site" evidence="1">
    <location>
        <begin position="380"/>
        <end position="383"/>
    </location>
    <ligand>
        <name>UDP-alpha-D-glucose</name>
        <dbReference type="ChEBI" id="CHEBI:58885"/>
    </ligand>
</feature>
<protein>
    <recommendedName>
        <fullName>UDP-glycosyltransferase 83A1</fullName>
        <ecNumber>2.4.1.-</ecNumber>
    </recommendedName>
</protein>
<dbReference type="EC" id="2.4.1.-"/>
<dbReference type="EMBL" id="AC011664">
    <property type="protein sequence ID" value="AAF14850.1"/>
    <property type="molecule type" value="Genomic_DNA"/>
</dbReference>
<dbReference type="EMBL" id="CP002686">
    <property type="protein sequence ID" value="AEE73763.1"/>
    <property type="molecule type" value="Genomic_DNA"/>
</dbReference>
<dbReference type="RefSeq" id="NP_186859.1">
    <property type="nucleotide sequence ID" value="NM_111076.1"/>
</dbReference>
<dbReference type="SMR" id="Q9SGA8"/>
<dbReference type="STRING" id="3702.Q9SGA8"/>
<dbReference type="CAZy" id="GT1">
    <property type="family name" value="Glycosyltransferase Family 1"/>
</dbReference>
<dbReference type="PaxDb" id="3702-AT3G02100.1"/>
<dbReference type="ProteomicsDB" id="242612"/>
<dbReference type="EnsemblPlants" id="AT3G02100.1">
    <property type="protein sequence ID" value="AT3G02100.1"/>
    <property type="gene ID" value="AT3G02100"/>
</dbReference>
<dbReference type="GeneID" id="820287"/>
<dbReference type="Gramene" id="AT3G02100.1">
    <property type="protein sequence ID" value="AT3G02100.1"/>
    <property type="gene ID" value="AT3G02100"/>
</dbReference>
<dbReference type="KEGG" id="ath:AT3G02100"/>
<dbReference type="Araport" id="AT3G02100"/>
<dbReference type="TAIR" id="AT3G02100"/>
<dbReference type="eggNOG" id="KOG1192">
    <property type="taxonomic scope" value="Eukaryota"/>
</dbReference>
<dbReference type="HOGENOM" id="CLU_001724_0_2_1"/>
<dbReference type="InParanoid" id="Q9SGA8"/>
<dbReference type="OMA" id="DGISCEN"/>
<dbReference type="PhylomeDB" id="Q9SGA8"/>
<dbReference type="PRO" id="PR:Q9SGA8"/>
<dbReference type="Proteomes" id="UP000006548">
    <property type="component" value="Chromosome 3"/>
</dbReference>
<dbReference type="ExpressionAtlas" id="Q9SGA8">
    <property type="expression patterns" value="baseline and differential"/>
</dbReference>
<dbReference type="GO" id="GO:0008194">
    <property type="term" value="F:UDP-glycosyltransferase activity"/>
    <property type="evidence" value="ECO:0007669"/>
    <property type="project" value="InterPro"/>
</dbReference>
<dbReference type="CDD" id="cd03784">
    <property type="entry name" value="GT1_Gtf-like"/>
    <property type="match status" value="1"/>
</dbReference>
<dbReference type="FunFam" id="3.40.50.2000:FF:000108">
    <property type="entry name" value="UDP-glycosyltransferase 83A1"/>
    <property type="match status" value="1"/>
</dbReference>
<dbReference type="Gene3D" id="3.40.50.2000">
    <property type="entry name" value="Glycogen Phosphorylase B"/>
    <property type="match status" value="2"/>
</dbReference>
<dbReference type="InterPro" id="IPR002213">
    <property type="entry name" value="UDP_glucos_trans"/>
</dbReference>
<dbReference type="PANTHER" id="PTHR11926">
    <property type="entry name" value="GLUCOSYL/GLUCURONOSYL TRANSFERASES"/>
    <property type="match status" value="1"/>
</dbReference>
<dbReference type="PANTHER" id="PTHR11926:SF1555">
    <property type="entry name" value="UDP-GLYCOSYLTRANSFERASE 83A1-LIKE"/>
    <property type="match status" value="1"/>
</dbReference>
<dbReference type="Pfam" id="PF00201">
    <property type="entry name" value="UDPGT"/>
    <property type="match status" value="1"/>
</dbReference>
<dbReference type="SUPFAM" id="SSF53756">
    <property type="entry name" value="UDP-Glycosyltransferase/glycogen phosphorylase"/>
    <property type="match status" value="1"/>
</dbReference>
<keyword id="KW-0328">Glycosyltransferase</keyword>
<keyword id="KW-1185">Reference proteome</keyword>
<keyword id="KW-0808">Transferase</keyword>
<gene>
    <name type="primary">UGT83A1</name>
    <name type="ordered locus">At3g02100</name>
    <name type="ORF">F1C9.11</name>
</gene>
<reference key="1">
    <citation type="journal article" date="2000" name="Nature">
        <title>Sequence and analysis of chromosome 3 of the plant Arabidopsis thaliana.</title>
        <authorList>
            <person name="Salanoubat M."/>
            <person name="Lemcke K."/>
            <person name="Rieger M."/>
            <person name="Ansorge W."/>
            <person name="Unseld M."/>
            <person name="Fartmann B."/>
            <person name="Valle G."/>
            <person name="Bloecker H."/>
            <person name="Perez-Alonso M."/>
            <person name="Obermaier B."/>
            <person name="Delseny M."/>
            <person name="Boutry M."/>
            <person name="Grivell L.A."/>
            <person name="Mache R."/>
            <person name="Puigdomenech P."/>
            <person name="De Simone V."/>
            <person name="Choisne N."/>
            <person name="Artiguenave F."/>
            <person name="Robert C."/>
            <person name="Brottier P."/>
            <person name="Wincker P."/>
            <person name="Cattolico L."/>
            <person name="Weissenbach J."/>
            <person name="Saurin W."/>
            <person name="Quetier F."/>
            <person name="Schaefer M."/>
            <person name="Mueller-Auer S."/>
            <person name="Gabel C."/>
            <person name="Fuchs M."/>
            <person name="Benes V."/>
            <person name="Wurmbach E."/>
            <person name="Drzonek H."/>
            <person name="Erfle H."/>
            <person name="Jordan N."/>
            <person name="Bangert S."/>
            <person name="Wiedelmann R."/>
            <person name="Kranz H."/>
            <person name="Voss H."/>
            <person name="Holland R."/>
            <person name="Brandt P."/>
            <person name="Nyakatura G."/>
            <person name="Vezzi A."/>
            <person name="D'Angelo M."/>
            <person name="Pallavicini A."/>
            <person name="Toppo S."/>
            <person name="Simionati B."/>
            <person name="Conrad A."/>
            <person name="Hornischer K."/>
            <person name="Kauer G."/>
            <person name="Loehnert T.-H."/>
            <person name="Nordsiek G."/>
            <person name="Reichelt J."/>
            <person name="Scharfe M."/>
            <person name="Schoen O."/>
            <person name="Bargues M."/>
            <person name="Terol J."/>
            <person name="Climent J."/>
            <person name="Navarro P."/>
            <person name="Collado C."/>
            <person name="Perez-Perez A."/>
            <person name="Ottenwaelder B."/>
            <person name="Duchemin D."/>
            <person name="Cooke R."/>
            <person name="Laudie M."/>
            <person name="Berger-Llauro C."/>
            <person name="Purnelle B."/>
            <person name="Masuy D."/>
            <person name="de Haan M."/>
            <person name="Maarse A.C."/>
            <person name="Alcaraz J.-P."/>
            <person name="Cottet A."/>
            <person name="Casacuberta E."/>
            <person name="Monfort A."/>
            <person name="Argiriou A."/>
            <person name="Flores M."/>
            <person name="Liguori R."/>
            <person name="Vitale D."/>
            <person name="Mannhaupt G."/>
            <person name="Haase D."/>
            <person name="Schoof H."/>
            <person name="Rudd S."/>
            <person name="Zaccaria P."/>
            <person name="Mewes H.-W."/>
            <person name="Mayer K.F.X."/>
            <person name="Kaul S."/>
            <person name="Town C.D."/>
            <person name="Koo H.L."/>
            <person name="Tallon L.J."/>
            <person name="Jenkins J."/>
            <person name="Rooney T."/>
            <person name="Rizzo M."/>
            <person name="Walts A."/>
            <person name="Utterback T."/>
            <person name="Fujii C.Y."/>
            <person name="Shea T.P."/>
            <person name="Creasy T.H."/>
            <person name="Haas B."/>
            <person name="Maiti R."/>
            <person name="Wu D."/>
            <person name="Peterson J."/>
            <person name="Van Aken S."/>
            <person name="Pai G."/>
            <person name="Militscher J."/>
            <person name="Sellers P."/>
            <person name="Gill J.E."/>
            <person name="Feldblyum T.V."/>
            <person name="Preuss D."/>
            <person name="Lin X."/>
            <person name="Nierman W.C."/>
            <person name="Salzberg S.L."/>
            <person name="White O."/>
            <person name="Venter J.C."/>
            <person name="Fraser C.M."/>
            <person name="Kaneko T."/>
            <person name="Nakamura Y."/>
            <person name="Sato S."/>
            <person name="Kato T."/>
            <person name="Asamizu E."/>
            <person name="Sasamoto S."/>
            <person name="Kimura T."/>
            <person name="Idesawa K."/>
            <person name="Kawashima K."/>
            <person name="Kishida Y."/>
            <person name="Kiyokawa C."/>
            <person name="Kohara M."/>
            <person name="Matsumoto M."/>
            <person name="Matsuno A."/>
            <person name="Muraki A."/>
            <person name="Nakayama S."/>
            <person name="Nakazaki N."/>
            <person name="Shinpo S."/>
            <person name="Takeuchi C."/>
            <person name="Wada T."/>
            <person name="Watanabe A."/>
            <person name="Yamada M."/>
            <person name="Yasuda M."/>
            <person name="Tabata S."/>
        </authorList>
    </citation>
    <scope>NUCLEOTIDE SEQUENCE [LARGE SCALE GENOMIC DNA]</scope>
    <source>
        <strain>cv. Columbia</strain>
    </source>
</reference>
<reference key="2">
    <citation type="journal article" date="2017" name="Plant J.">
        <title>Araport11: a complete reannotation of the Arabidopsis thaliana reference genome.</title>
        <authorList>
            <person name="Cheng C.Y."/>
            <person name="Krishnakumar V."/>
            <person name="Chan A.P."/>
            <person name="Thibaud-Nissen F."/>
            <person name="Schobel S."/>
            <person name="Town C.D."/>
        </authorList>
    </citation>
    <scope>GENOME REANNOTATION</scope>
    <source>
        <strain>cv. Columbia</strain>
    </source>
</reference>
<reference key="3">
    <citation type="journal article" date="2001" name="J. Biol. Chem.">
        <title>Phylogenetic analysis of the UDP-glycosyltransferase multigene family of Arabidopsis thaliana.</title>
        <authorList>
            <person name="Li Y."/>
            <person name="Baldauf S."/>
            <person name="Lim E.K."/>
            <person name="Bowles D.J."/>
        </authorList>
    </citation>
    <scope>GENE FAMILY</scope>
</reference>
<proteinExistence type="evidence at transcript level"/>
<comment type="similarity">
    <text evidence="2">Belongs to the UDP-glycosyltransferase family.</text>
</comment>
<sequence>MDNNSNKRMGRPHVVVIPYPAQGHVLPLISFSRYLAKQGIQITFINTEFNHNRIISSLPNSPHEDYVGDQINLVSIPDGLEDSPEERNIPGKLSESVLRFMPKKVEELIERMMAETSGGTIISCVVADQSLGWAIEVAAKFGIRRTAFCPAAAASMVLGFSIQKLIDDGLIDSDGTVRVNKTIQLSPGMPKMETDKFVWVCLKNKESQKNIFQLMLQNNNSIESTDWLLCNSVHELETAAFGLGPNIVPIGPIGWAHSLEEGSTSLGSFLPHDRDCLDWLDRQIPGSVIYVAFGSFGVMGNPQLEELAIGLELTKRPVLWVTGDQQPIKLGSDRVKVVRWAPQREVLSSGAIGCFVSHCGWNSTLEGAQNGIPFLCIPYFADQFINKAYICDVWKIGLGLERDARGVVPRLEVKKKIDEIMRDGGEYEERAMKVKEIVMKSVAKDGISCENLNKFVNWIKSQVN</sequence>